<evidence type="ECO:0000255" key="1">
    <source>
        <dbReference type="HAMAP-Rule" id="MF_03137"/>
    </source>
</evidence>
<evidence type="ECO:0000256" key="2">
    <source>
        <dbReference type="SAM" id="MobiDB-lite"/>
    </source>
</evidence>
<evidence type="ECO:0000305" key="3"/>
<dbReference type="EC" id="3.6.5.-"/>
<dbReference type="EMBL" id="AAXT02000004">
    <property type="protein sequence ID" value="EDO08727.1"/>
    <property type="molecule type" value="Genomic_DNA"/>
</dbReference>
<dbReference type="RefSeq" id="XP_001612295.1">
    <property type="nucleotide sequence ID" value="XM_001612245.1"/>
</dbReference>
<dbReference type="SMR" id="A7AQ93"/>
<dbReference type="FunCoup" id="A7AQ93">
    <property type="interactions" value="186"/>
</dbReference>
<dbReference type="STRING" id="5865.A7AQ93"/>
<dbReference type="EnsemblProtists" id="EDO08727">
    <property type="protein sequence ID" value="EDO08727"/>
    <property type="gene ID" value="BBOV_III011750"/>
</dbReference>
<dbReference type="GeneID" id="5480555"/>
<dbReference type="KEGG" id="bbo:BBOV_III011750"/>
<dbReference type="VEuPathDB" id="PiroplasmaDB:BBOV_III011750"/>
<dbReference type="eggNOG" id="KOG0462">
    <property type="taxonomic scope" value="Eukaryota"/>
</dbReference>
<dbReference type="InParanoid" id="A7AQ93"/>
<dbReference type="OMA" id="EYSFVGY"/>
<dbReference type="Proteomes" id="UP000002173">
    <property type="component" value="Unassembled WGS sequence"/>
</dbReference>
<dbReference type="GO" id="GO:0005743">
    <property type="term" value="C:mitochondrial inner membrane"/>
    <property type="evidence" value="ECO:0007669"/>
    <property type="project" value="UniProtKB-SubCell"/>
</dbReference>
<dbReference type="GO" id="GO:0005759">
    <property type="term" value="C:mitochondrial matrix"/>
    <property type="evidence" value="ECO:0007669"/>
    <property type="project" value="UniProtKB-UniRule"/>
</dbReference>
<dbReference type="GO" id="GO:0005525">
    <property type="term" value="F:GTP binding"/>
    <property type="evidence" value="ECO:0007669"/>
    <property type="project" value="UniProtKB-UniRule"/>
</dbReference>
<dbReference type="GO" id="GO:0003924">
    <property type="term" value="F:GTPase activity"/>
    <property type="evidence" value="ECO:0007669"/>
    <property type="project" value="UniProtKB-UniRule"/>
</dbReference>
<dbReference type="GO" id="GO:0043022">
    <property type="term" value="F:ribosome binding"/>
    <property type="evidence" value="ECO:0007669"/>
    <property type="project" value="UniProtKB-UniRule"/>
</dbReference>
<dbReference type="GO" id="GO:0045727">
    <property type="term" value="P:positive regulation of translation"/>
    <property type="evidence" value="ECO:0007669"/>
    <property type="project" value="UniProtKB-UniRule"/>
</dbReference>
<dbReference type="GO" id="GO:0006412">
    <property type="term" value="P:translation"/>
    <property type="evidence" value="ECO:0007669"/>
    <property type="project" value="UniProtKB-KW"/>
</dbReference>
<dbReference type="CDD" id="cd03699">
    <property type="entry name" value="EF4_II"/>
    <property type="match status" value="1"/>
</dbReference>
<dbReference type="CDD" id="cd16260">
    <property type="entry name" value="EF4_III"/>
    <property type="match status" value="1"/>
</dbReference>
<dbReference type="CDD" id="cd01890">
    <property type="entry name" value="LepA"/>
    <property type="match status" value="1"/>
</dbReference>
<dbReference type="Gene3D" id="3.30.70.240">
    <property type="match status" value="1"/>
</dbReference>
<dbReference type="Gene3D" id="3.30.70.2570">
    <property type="entry name" value="Elongation factor 4, C-terminal domain"/>
    <property type="match status" value="1"/>
</dbReference>
<dbReference type="Gene3D" id="3.30.70.870">
    <property type="entry name" value="Elongation Factor G (Translational Gtpase), domain 3"/>
    <property type="match status" value="1"/>
</dbReference>
<dbReference type="Gene3D" id="3.40.50.300">
    <property type="entry name" value="P-loop containing nucleotide triphosphate hydrolases"/>
    <property type="match status" value="1"/>
</dbReference>
<dbReference type="Gene3D" id="2.40.30.10">
    <property type="entry name" value="Translation factors"/>
    <property type="match status" value="1"/>
</dbReference>
<dbReference type="HAMAP" id="MF_00071">
    <property type="entry name" value="LepA"/>
    <property type="match status" value="1"/>
</dbReference>
<dbReference type="InterPro" id="IPR006297">
    <property type="entry name" value="EF-4"/>
</dbReference>
<dbReference type="InterPro" id="IPR035647">
    <property type="entry name" value="EFG_III/V"/>
</dbReference>
<dbReference type="InterPro" id="IPR000640">
    <property type="entry name" value="EFG_V-like"/>
</dbReference>
<dbReference type="InterPro" id="IPR031157">
    <property type="entry name" value="G_TR_CS"/>
</dbReference>
<dbReference type="InterPro" id="IPR038363">
    <property type="entry name" value="LepA_C_sf"/>
</dbReference>
<dbReference type="InterPro" id="IPR013842">
    <property type="entry name" value="LepA_CTD"/>
</dbReference>
<dbReference type="InterPro" id="IPR027417">
    <property type="entry name" value="P-loop_NTPase"/>
</dbReference>
<dbReference type="InterPro" id="IPR005225">
    <property type="entry name" value="Small_GTP-bd"/>
</dbReference>
<dbReference type="InterPro" id="IPR000795">
    <property type="entry name" value="T_Tr_GTP-bd_dom"/>
</dbReference>
<dbReference type="NCBIfam" id="TIGR01393">
    <property type="entry name" value="lepA"/>
    <property type="match status" value="1"/>
</dbReference>
<dbReference type="NCBIfam" id="TIGR00231">
    <property type="entry name" value="small_GTP"/>
    <property type="match status" value="1"/>
</dbReference>
<dbReference type="PANTHER" id="PTHR43512:SF4">
    <property type="entry name" value="TRANSLATION FACTOR GUF1 HOMOLOG, CHLOROPLASTIC"/>
    <property type="match status" value="1"/>
</dbReference>
<dbReference type="PANTHER" id="PTHR43512">
    <property type="entry name" value="TRANSLATION FACTOR GUF1-RELATED"/>
    <property type="match status" value="1"/>
</dbReference>
<dbReference type="Pfam" id="PF00679">
    <property type="entry name" value="EFG_C"/>
    <property type="match status" value="1"/>
</dbReference>
<dbReference type="Pfam" id="PF00009">
    <property type="entry name" value="GTP_EFTU"/>
    <property type="match status" value="1"/>
</dbReference>
<dbReference type="Pfam" id="PF06421">
    <property type="entry name" value="LepA_C"/>
    <property type="match status" value="1"/>
</dbReference>
<dbReference type="PRINTS" id="PR00315">
    <property type="entry name" value="ELONGATNFCT"/>
</dbReference>
<dbReference type="SUPFAM" id="SSF54980">
    <property type="entry name" value="EF-G C-terminal domain-like"/>
    <property type="match status" value="2"/>
</dbReference>
<dbReference type="SUPFAM" id="SSF52540">
    <property type="entry name" value="P-loop containing nucleoside triphosphate hydrolases"/>
    <property type="match status" value="1"/>
</dbReference>
<dbReference type="PROSITE" id="PS00301">
    <property type="entry name" value="G_TR_1"/>
    <property type="match status" value="1"/>
</dbReference>
<dbReference type="PROSITE" id="PS51722">
    <property type="entry name" value="G_TR_2"/>
    <property type="match status" value="1"/>
</dbReference>
<proteinExistence type="inferred from homology"/>
<reference key="1">
    <citation type="journal article" date="2007" name="PLoS Pathog.">
        <title>Genome sequence of Babesia bovis and comparative analysis of apicomplexan hemoprotozoa.</title>
        <authorList>
            <person name="Brayton K.A."/>
            <person name="Lau A.O.T."/>
            <person name="Herndon D.R."/>
            <person name="Hannick L."/>
            <person name="Kappmeyer L.S."/>
            <person name="Berens S.J."/>
            <person name="Bidwell S.L."/>
            <person name="Brown W.C."/>
            <person name="Crabtree J."/>
            <person name="Fadrosh D."/>
            <person name="Feldblum T."/>
            <person name="Forberger H.A."/>
            <person name="Haas B.J."/>
            <person name="Howell J.M."/>
            <person name="Khouri H."/>
            <person name="Koo H."/>
            <person name="Mann D.J."/>
            <person name="Norimine J."/>
            <person name="Paulsen I.T."/>
            <person name="Radune D."/>
            <person name="Ren Q."/>
            <person name="Smith R.K. Jr."/>
            <person name="Suarez C.E."/>
            <person name="White O."/>
            <person name="Wortman J.R."/>
            <person name="Knowles D.P. Jr."/>
            <person name="McElwain T.F."/>
            <person name="Nene V.M."/>
        </authorList>
    </citation>
    <scope>NUCLEOTIDE SEQUENCE [LARGE SCALE GENOMIC DNA]</scope>
    <source>
        <strain>T2Bo</strain>
    </source>
</reference>
<sequence>MVCHRYLLGLGASTLCLRRLAQYPSTEYHGIASRHRSPGYYAYILGNFNISNEEQLFSSVHSLANNDSDVLPVEDNGTTNLTGTGEATSETGKEEEVVNEPYNGNRMRNFCIIAHVDHGKSTLADRFLELTKAVEPHEIQGQYLDNMELERERGITIKLQSALIKYTYPKDGQVYSLNLIDTPGHIDFNHEARRSIAACEGAILVVDGTKGIQAQTVTTSMIAIEAGLKLIPVVNKIDVPFCDYESTVADLTSLFDFSEDEILMASAKEGFGINEILDAVVERIPPPKINLDRPFRALVFDSQYDPHRGVVSYVRVSDGIIKKLDDVVFLGHNLESRITAVGVMMPELRERDVLRSGEVGWLCSNTKDPSKVAVGDTVALKSAVKDNNVEPLVAFAPAKPSVFAGLYPCDGSDYMRLSVALEKLKLNDHSIVFEPSESSIAGHGFKCGFNGLLHLDVTVQRLQREFDVGVIVTSPSVPYKCILKNGKEITVSDAAHWPEEGMVKVSMEPWTNVTVRIPGDCHKKVSNLLTQMRGEFQKKSEFAGGKSLVLEYKVPMIEIISTFFDNLKSMTNGFGSFDYEGTEYREIDLCKLRVLINGEEAGGLSMLVARDNAYKSGRLLVETLREVIPPKQFKINLQAAIGKRVIAALSIPALRKNVTERCSGGDPSRKRKLLENQAKGKKYMAEIGNVSIPFDAYKAVHKALR</sequence>
<keyword id="KW-0342">GTP-binding</keyword>
<keyword id="KW-0378">Hydrolase</keyword>
<keyword id="KW-0472">Membrane</keyword>
<keyword id="KW-0496">Mitochondrion</keyword>
<keyword id="KW-0999">Mitochondrion inner membrane</keyword>
<keyword id="KW-0547">Nucleotide-binding</keyword>
<keyword id="KW-0648">Protein biosynthesis</keyword>
<keyword id="KW-1185">Reference proteome</keyword>
<keyword id="KW-0809">Transit peptide</keyword>
<comment type="function">
    <text evidence="1">Promotes mitochondrial protein synthesis. May act as a fidelity factor of the translation reaction, by catalyzing a one-codon backward translocation of tRNAs on improperly translocated ribosomes. Binds to mitochondrial ribosomes in a GTP-dependent manner.</text>
</comment>
<comment type="catalytic activity">
    <reaction evidence="1">
        <text>GTP + H2O = GDP + phosphate + H(+)</text>
        <dbReference type="Rhea" id="RHEA:19669"/>
        <dbReference type="ChEBI" id="CHEBI:15377"/>
        <dbReference type="ChEBI" id="CHEBI:15378"/>
        <dbReference type="ChEBI" id="CHEBI:37565"/>
        <dbReference type="ChEBI" id="CHEBI:43474"/>
        <dbReference type="ChEBI" id="CHEBI:58189"/>
    </reaction>
</comment>
<comment type="subcellular location">
    <subcellularLocation>
        <location evidence="1">Mitochondrion inner membrane</location>
        <topology evidence="1">Peripheral membrane protein</topology>
        <orientation evidence="1">Matrix side</orientation>
    </subcellularLocation>
</comment>
<comment type="similarity">
    <text evidence="3">Belongs to the TRAFAC class translation factor GTPase superfamily. Classic translation factor GTPase family. LepA subfamily.</text>
</comment>
<feature type="transit peptide" description="Mitochondrion" evidence="1">
    <location>
        <begin position="1"/>
        <end position="20"/>
    </location>
</feature>
<feature type="chain" id="PRO_0000402851" description="Translation factor GUF1 homolog, mitochondrial">
    <location>
        <begin position="21"/>
        <end position="705"/>
    </location>
</feature>
<feature type="domain" description="tr-type G">
    <location>
        <begin position="105"/>
        <end position="288"/>
    </location>
</feature>
<feature type="region of interest" description="Disordered" evidence="2">
    <location>
        <begin position="72"/>
        <end position="92"/>
    </location>
</feature>
<feature type="compositionally biased region" description="Polar residues" evidence="2">
    <location>
        <begin position="76"/>
        <end position="90"/>
    </location>
</feature>
<feature type="binding site" evidence="1">
    <location>
        <begin position="114"/>
        <end position="121"/>
    </location>
    <ligand>
        <name>GTP</name>
        <dbReference type="ChEBI" id="CHEBI:37565"/>
    </ligand>
</feature>
<feature type="binding site" evidence="1">
    <location>
        <begin position="181"/>
        <end position="185"/>
    </location>
    <ligand>
        <name>GTP</name>
        <dbReference type="ChEBI" id="CHEBI:37565"/>
    </ligand>
</feature>
<feature type="binding site" evidence="1">
    <location>
        <begin position="235"/>
        <end position="238"/>
    </location>
    <ligand>
        <name>GTP</name>
        <dbReference type="ChEBI" id="CHEBI:37565"/>
    </ligand>
</feature>
<accession>A7AQ93</accession>
<gene>
    <name type="ORF">BBOV_III011750</name>
</gene>
<protein>
    <recommendedName>
        <fullName evidence="1">Translation factor GUF1 homolog, mitochondrial</fullName>
        <ecNumber>3.6.5.-</ecNumber>
    </recommendedName>
    <alternativeName>
        <fullName evidence="1">Elongation factor 4 homolog</fullName>
        <shortName evidence="1">EF-4</shortName>
    </alternativeName>
    <alternativeName>
        <fullName evidence="1">GTPase GUF1 homolog</fullName>
    </alternativeName>
    <alternativeName>
        <fullName evidence="1">Ribosomal back-translocase</fullName>
    </alternativeName>
</protein>
<organism>
    <name type="scientific">Babesia bovis</name>
    <dbReference type="NCBI Taxonomy" id="5865"/>
    <lineage>
        <taxon>Eukaryota</taxon>
        <taxon>Sar</taxon>
        <taxon>Alveolata</taxon>
        <taxon>Apicomplexa</taxon>
        <taxon>Aconoidasida</taxon>
        <taxon>Piroplasmida</taxon>
        <taxon>Babesiidae</taxon>
        <taxon>Babesia</taxon>
    </lineage>
</organism>
<name>GUF1_BABBO</name>